<sequence length="504" mass="56568">MSVVSSFHQSWKSLILASQRCNTVKQIKSTHSLFIIHGLHRNTYAISKLLTAFLHLPNLNKHFHYASSIFDSIEIPNSFVYDTMIRICSRSSQPHLGLRYFLLMVKEEEEDIAPSYLTFHFLIVACLKACFFSVGKQIHCWVVKNGVFLSDSHVQTGVLRIYVEDKLLLDARKVFDEIPQPDVVKWDVLMNGYVRCGLGSEGLEVFREMLVKGLEPDEFSVTTALTACAQVGALAQGKWIHEFVKKKSWIESDVFVGTALVDMYAKCGCIETAVEVFKKLTRRNVFSWAALIGGYAAYGYAKKAMTCLERLEREDGIKPDSVVLLGVLAACAHGGFLEEGRSMLENMEARYEITPKHEHYSCIVDLMCRAGRLDDALNLIEKMPMKPLASVWGALLNGCRTHKNVELGELAVKNLLDLEKGNVEEEEAALVQLSNIYFSVQRNPEASKVRGMIEQRGVRKTPGWSVLEVDGNVTKFVSGDVSHPNLLQIHTVIHLLSVDALQIL</sequence>
<accession>Q9LJJ1</accession>
<evidence type="ECO:0000305" key="1"/>
<keyword id="KW-1185">Reference proteome</keyword>
<keyword id="KW-0677">Repeat</keyword>
<gene>
    <name type="primary">PCMP-E79</name>
    <name type="ordered locus">At3g28640</name>
    <name type="ORF">MZN14.11</name>
</gene>
<reference key="1">
    <citation type="journal article" date="2000" name="DNA Res.">
        <title>Structural analysis of Arabidopsis thaliana chromosome 3. I. Sequence features of the regions of 4,504,864 bp covered by sixty P1 and TAC clones.</title>
        <authorList>
            <person name="Sato S."/>
            <person name="Nakamura Y."/>
            <person name="Kaneko T."/>
            <person name="Katoh T."/>
            <person name="Asamizu E."/>
            <person name="Tabata S."/>
        </authorList>
    </citation>
    <scope>NUCLEOTIDE SEQUENCE [LARGE SCALE GENOMIC DNA]</scope>
    <source>
        <strain>cv. Columbia</strain>
    </source>
</reference>
<reference key="2">
    <citation type="journal article" date="2017" name="Plant J.">
        <title>Araport11: a complete reannotation of the Arabidopsis thaliana reference genome.</title>
        <authorList>
            <person name="Cheng C.Y."/>
            <person name="Krishnakumar V."/>
            <person name="Chan A.P."/>
            <person name="Thibaud-Nissen F."/>
            <person name="Schobel S."/>
            <person name="Town C.D."/>
        </authorList>
    </citation>
    <scope>GENOME REANNOTATION</scope>
    <source>
        <strain>cv. Columbia</strain>
    </source>
</reference>
<reference key="3">
    <citation type="journal article" date="2004" name="Plant Cell">
        <title>Genome-wide analysis of Arabidopsis pentatricopeptide repeat proteins reveals their essential role in organelle biogenesis.</title>
        <authorList>
            <person name="Lurin C."/>
            <person name="Andres C."/>
            <person name="Aubourg S."/>
            <person name="Bellaoui M."/>
            <person name="Bitton F."/>
            <person name="Bruyere C."/>
            <person name="Caboche M."/>
            <person name="Debast C."/>
            <person name="Gualberto J."/>
            <person name="Hoffmann B."/>
            <person name="Lecharny A."/>
            <person name="Le Ret M."/>
            <person name="Martin-Magniette M.-L."/>
            <person name="Mireau H."/>
            <person name="Peeters N."/>
            <person name="Renou J.-P."/>
            <person name="Szurek B."/>
            <person name="Taconnat L."/>
            <person name="Small I."/>
        </authorList>
    </citation>
    <scope>GENE FAMILY</scope>
</reference>
<feature type="chain" id="PRO_0000356118" description="Putative pentatricopeptide repeat-containing protein At3g28640">
    <location>
        <begin position="1"/>
        <end position="504"/>
    </location>
</feature>
<feature type="repeat" description="PPR 1">
    <location>
        <begin position="77"/>
        <end position="107"/>
    </location>
</feature>
<feature type="repeat" description="PPR 2">
    <location>
        <begin position="115"/>
        <end position="149"/>
    </location>
</feature>
<feature type="repeat" description="PPR 3">
    <location>
        <begin position="151"/>
        <end position="181"/>
    </location>
</feature>
<feature type="repeat" description="PPR 4">
    <location>
        <begin position="182"/>
        <end position="216"/>
    </location>
</feature>
<feature type="repeat" description="PPR 5">
    <location>
        <begin position="217"/>
        <end position="251"/>
    </location>
</feature>
<feature type="repeat" description="PPR 6">
    <location>
        <begin position="253"/>
        <end position="287"/>
    </location>
</feature>
<feature type="repeat" description="PPR 7">
    <location>
        <begin position="288"/>
        <end position="319"/>
    </location>
</feature>
<feature type="repeat" description="PPR 8">
    <location>
        <begin position="320"/>
        <end position="350"/>
    </location>
</feature>
<feature type="repeat" description="PPR 9">
    <location>
        <begin position="356"/>
        <end position="390"/>
    </location>
</feature>
<feature type="region of interest" description="Type E motif">
    <location>
        <begin position="391"/>
        <end position="470"/>
    </location>
</feature>
<feature type="region of interest" description="Type E(+) motif">
    <location>
        <begin position="471"/>
        <end position="501"/>
    </location>
</feature>
<protein>
    <recommendedName>
        <fullName>Putative pentatricopeptide repeat-containing protein At3g28640</fullName>
    </recommendedName>
</protein>
<dbReference type="EMBL" id="AP000420">
    <property type="protein sequence ID" value="BAB02180.1"/>
    <property type="molecule type" value="Genomic_DNA"/>
</dbReference>
<dbReference type="EMBL" id="CP002686">
    <property type="protein sequence ID" value="AEE77469.1"/>
    <property type="molecule type" value="Genomic_DNA"/>
</dbReference>
<dbReference type="RefSeq" id="NP_189505.2">
    <property type="nucleotide sequence ID" value="NM_113784.2"/>
</dbReference>
<dbReference type="SMR" id="Q9LJJ1"/>
<dbReference type="FunCoup" id="Q9LJJ1">
    <property type="interactions" value="79"/>
</dbReference>
<dbReference type="STRING" id="3702.Q9LJJ1"/>
<dbReference type="PaxDb" id="3702-AT3G28640.1"/>
<dbReference type="ProteomicsDB" id="249189"/>
<dbReference type="EnsemblPlants" id="AT3G28640.1">
    <property type="protein sequence ID" value="AT3G28640.1"/>
    <property type="gene ID" value="AT3G28640"/>
</dbReference>
<dbReference type="GeneID" id="822494"/>
<dbReference type="Gramene" id="AT3G28640.1">
    <property type="protein sequence ID" value="AT3G28640.1"/>
    <property type="gene ID" value="AT3G28640"/>
</dbReference>
<dbReference type="KEGG" id="ath:AT3G28640"/>
<dbReference type="Araport" id="AT3G28640"/>
<dbReference type="TAIR" id="AT3G28640"/>
<dbReference type="eggNOG" id="KOG4197">
    <property type="taxonomic scope" value="Eukaryota"/>
</dbReference>
<dbReference type="HOGENOM" id="CLU_002706_0_6_1"/>
<dbReference type="InParanoid" id="Q9LJJ1"/>
<dbReference type="OMA" id="GKQIQNW"/>
<dbReference type="OrthoDB" id="426361at2759"/>
<dbReference type="PhylomeDB" id="Q9LJJ1"/>
<dbReference type="PRO" id="PR:Q9LJJ1"/>
<dbReference type="Proteomes" id="UP000006548">
    <property type="component" value="Chromosome 3"/>
</dbReference>
<dbReference type="ExpressionAtlas" id="Q9LJJ1">
    <property type="expression patterns" value="baseline and differential"/>
</dbReference>
<dbReference type="GO" id="GO:0003723">
    <property type="term" value="F:RNA binding"/>
    <property type="evidence" value="ECO:0007669"/>
    <property type="project" value="InterPro"/>
</dbReference>
<dbReference type="GO" id="GO:0009451">
    <property type="term" value="P:RNA modification"/>
    <property type="evidence" value="ECO:0007669"/>
    <property type="project" value="InterPro"/>
</dbReference>
<dbReference type="FunFam" id="1.25.40.10:FF:001236">
    <property type="entry name" value="Pentatricopeptide repeat-containing protein At3g28660"/>
    <property type="match status" value="1"/>
</dbReference>
<dbReference type="FunFam" id="1.25.40.10:FF:001394">
    <property type="entry name" value="Pentatricopeptide repeat-containing protein At3g28660"/>
    <property type="match status" value="1"/>
</dbReference>
<dbReference type="FunFam" id="1.25.40.10:FF:001279">
    <property type="entry name" value="Pentatricopeptide repeat-containing protein ELI1, chloroplastic"/>
    <property type="match status" value="1"/>
</dbReference>
<dbReference type="Gene3D" id="1.25.40.10">
    <property type="entry name" value="Tetratricopeptide repeat domain"/>
    <property type="match status" value="3"/>
</dbReference>
<dbReference type="InterPro" id="IPR046848">
    <property type="entry name" value="E_motif"/>
</dbReference>
<dbReference type="InterPro" id="IPR002885">
    <property type="entry name" value="Pentatricopeptide_rpt"/>
</dbReference>
<dbReference type="InterPro" id="IPR046960">
    <property type="entry name" value="PPR_At4g14850-like_plant"/>
</dbReference>
<dbReference type="InterPro" id="IPR011990">
    <property type="entry name" value="TPR-like_helical_dom_sf"/>
</dbReference>
<dbReference type="NCBIfam" id="TIGR00756">
    <property type="entry name" value="PPR"/>
    <property type="match status" value="3"/>
</dbReference>
<dbReference type="PANTHER" id="PTHR47926">
    <property type="entry name" value="PENTATRICOPEPTIDE REPEAT-CONTAINING PROTEIN"/>
    <property type="match status" value="1"/>
</dbReference>
<dbReference type="PANTHER" id="PTHR47926:SF379">
    <property type="entry name" value="TETRATRICOPEPTIDE-LIKE HELICAL DOMAIN SUPERFAMILY"/>
    <property type="match status" value="1"/>
</dbReference>
<dbReference type="Pfam" id="PF20431">
    <property type="entry name" value="E_motif"/>
    <property type="match status" value="1"/>
</dbReference>
<dbReference type="Pfam" id="PF01535">
    <property type="entry name" value="PPR"/>
    <property type="match status" value="3"/>
</dbReference>
<dbReference type="Pfam" id="PF12854">
    <property type="entry name" value="PPR_1"/>
    <property type="match status" value="1"/>
</dbReference>
<dbReference type="Pfam" id="PF13041">
    <property type="entry name" value="PPR_2"/>
    <property type="match status" value="1"/>
</dbReference>
<dbReference type="PROSITE" id="PS51375">
    <property type="entry name" value="PPR"/>
    <property type="match status" value="9"/>
</dbReference>
<comment type="similarity">
    <text evidence="1">Belongs to the PPR family. PCMP-E subfamily.</text>
</comment>
<comment type="online information" name="Pentatricopeptide repeat proteins">
    <link uri="https://ppr.plantenergy.uwa.edu.au"/>
</comment>
<proteinExistence type="inferred from homology"/>
<organism>
    <name type="scientific">Arabidopsis thaliana</name>
    <name type="common">Mouse-ear cress</name>
    <dbReference type="NCBI Taxonomy" id="3702"/>
    <lineage>
        <taxon>Eukaryota</taxon>
        <taxon>Viridiplantae</taxon>
        <taxon>Streptophyta</taxon>
        <taxon>Embryophyta</taxon>
        <taxon>Tracheophyta</taxon>
        <taxon>Spermatophyta</taxon>
        <taxon>Magnoliopsida</taxon>
        <taxon>eudicotyledons</taxon>
        <taxon>Gunneridae</taxon>
        <taxon>Pentapetalae</taxon>
        <taxon>rosids</taxon>
        <taxon>malvids</taxon>
        <taxon>Brassicales</taxon>
        <taxon>Brassicaceae</taxon>
        <taxon>Camelineae</taxon>
        <taxon>Arabidopsis</taxon>
    </lineage>
</organism>
<name>PP259_ARATH</name>